<protein>
    <recommendedName>
        <fullName evidence="1">UDP-N-acetylmuramate--L-alanine ligase</fullName>
        <ecNumber evidence="1">6.3.2.8</ecNumber>
    </recommendedName>
    <alternativeName>
        <fullName evidence="1">UDP-N-acetylmuramoyl-L-alanine synthetase</fullName>
    </alternativeName>
</protein>
<keyword id="KW-0067">ATP-binding</keyword>
<keyword id="KW-0131">Cell cycle</keyword>
<keyword id="KW-0132">Cell division</keyword>
<keyword id="KW-0133">Cell shape</keyword>
<keyword id="KW-0961">Cell wall biogenesis/degradation</keyword>
<keyword id="KW-0963">Cytoplasm</keyword>
<keyword id="KW-0436">Ligase</keyword>
<keyword id="KW-0547">Nucleotide-binding</keyword>
<keyword id="KW-0573">Peptidoglycan synthesis</keyword>
<keyword id="KW-1185">Reference proteome</keyword>
<feature type="chain" id="PRO_0000242569" description="UDP-N-acetylmuramate--L-alanine ligase">
    <location>
        <begin position="1"/>
        <end position="493"/>
    </location>
</feature>
<feature type="binding site" evidence="1">
    <location>
        <begin position="112"/>
        <end position="118"/>
    </location>
    <ligand>
        <name>ATP</name>
        <dbReference type="ChEBI" id="CHEBI:30616"/>
    </ligand>
</feature>
<gene>
    <name evidence="1" type="primary">murC</name>
    <name type="ordered locus">Nmul_A2493</name>
</gene>
<dbReference type="EC" id="6.3.2.8" evidence="1"/>
<dbReference type="EMBL" id="CP000103">
    <property type="protein sequence ID" value="ABB75782.1"/>
    <property type="status" value="ALT_INIT"/>
    <property type="molecule type" value="Genomic_DNA"/>
</dbReference>
<dbReference type="RefSeq" id="WP_041352622.1">
    <property type="nucleotide sequence ID" value="NC_007614.1"/>
</dbReference>
<dbReference type="SMR" id="Q2Y639"/>
<dbReference type="STRING" id="323848.Nmul_A2493"/>
<dbReference type="KEGG" id="nmu:Nmul_A2493"/>
<dbReference type="eggNOG" id="COG0773">
    <property type="taxonomic scope" value="Bacteria"/>
</dbReference>
<dbReference type="HOGENOM" id="CLU_028104_2_2_4"/>
<dbReference type="OrthoDB" id="9804126at2"/>
<dbReference type="UniPathway" id="UPA00219"/>
<dbReference type="Proteomes" id="UP000002718">
    <property type="component" value="Chromosome"/>
</dbReference>
<dbReference type="GO" id="GO:0005737">
    <property type="term" value="C:cytoplasm"/>
    <property type="evidence" value="ECO:0007669"/>
    <property type="project" value="UniProtKB-SubCell"/>
</dbReference>
<dbReference type="GO" id="GO:0005524">
    <property type="term" value="F:ATP binding"/>
    <property type="evidence" value="ECO:0007669"/>
    <property type="project" value="UniProtKB-UniRule"/>
</dbReference>
<dbReference type="GO" id="GO:0008763">
    <property type="term" value="F:UDP-N-acetylmuramate-L-alanine ligase activity"/>
    <property type="evidence" value="ECO:0007669"/>
    <property type="project" value="UniProtKB-UniRule"/>
</dbReference>
<dbReference type="GO" id="GO:0051301">
    <property type="term" value="P:cell division"/>
    <property type="evidence" value="ECO:0007669"/>
    <property type="project" value="UniProtKB-KW"/>
</dbReference>
<dbReference type="GO" id="GO:0071555">
    <property type="term" value="P:cell wall organization"/>
    <property type="evidence" value="ECO:0007669"/>
    <property type="project" value="UniProtKB-KW"/>
</dbReference>
<dbReference type="GO" id="GO:0009252">
    <property type="term" value="P:peptidoglycan biosynthetic process"/>
    <property type="evidence" value="ECO:0007669"/>
    <property type="project" value="UniProtKB-UniRule"/>
</dbReference>
<dbReference type="GO" id="GO:0008360">
    <property type="term" value="P:regulation of cell shape"/>
    <property type="evidence" value="ECO:0007669"/>
    <property type="project" value="UniProtKB-KW"/>
</dbReference>
<dbReference type="FunFam" id="3.40.1190.10:FF:000001">
    <property type="entry name" value="UDP-N-acetylmuramate--L-alanine ligase"/>
    <property type="match status" value="1"/>
</dbReference>
<dbReference type="Gene3D" id="3.90.190.20">
    <property type="entry name" value="Mur ligase, C-terminal domain"/>
    <property type="match status" value="1"/>
</dbReference>
<dbReference type="Gene3D" id="3.40.1190.10">
    <property type="entry name" value="Mur-like, catalytic domain"/>
    <property type="match status" value="1"/>
</dbReference>
<dbReference type="Gene3D" id="3.40.50.720">
    <property type="entry name" value="NAD(P)-binding Rossmann-like Domain"/>
    <property type="match status" value="1"/>
</dbReference>
<dbReference type="HAMAP" id="MF_00046">
    <property type="entry name" value="MurC"/>
    <property type="match status" value="1"/>
</dbReference>
<dbReference type="InterPro" id="IPR036565">
    <property type="entry name" value="Mur-like_cat_sf"/>
</dbReference>
<dbReference type="InterPro" id="IPR004101">
    <property type="entry name" value="Mur_ligase_C"/>
</dbReference>
<dbReference type="InterPro" id="IPR036615">
    <property type="entry name" value="Mur_ligase_C_dom_sf"/>
</dbReference>
<dbReference type="InterPro" id="IPR013221">
    <property type="entry name" value="Mur_ligase_cen"/>
</dbReference>
<dbReference type="InterPro" id="IPR000713">
    <property type="entry name" value="Mur_ligase_N"/>
</dbReference>
<dbReference type="InterPro" id="IPR050061">
    <property type="entry name" value="MurCDEF_pg_biosynth"/>
</dbReference>
<dbReference type="InterPro" id="IPR005758">
    <property type="entry name" value="UDP-N-AcMur_Ala_ligase_MurC"/>
</dbReference>
<dbReference type="NCBIfam" id="TIGR01082">
    <property type="entry name" value="murC"/>
    <property type="match status" value="1"/>
</dbReference>
<dbReference type="PANTHER" id="PTHR43445:SF3">
    <property type="entry name" value="UDP-N-ACETYLMURAMATE--L-ALANINE LIGASE"/>
    <property type="match status" value="1"/>
</dbReference>
<dbReference type="PANTHER" id="PTHR43445">
    <property type="entry name" value="UDP-N-ACETYLMURAMATE--L-ALANINE LIGASE-RELATED"/>
    <property type="match status" value="1"/>
</dbReference>
<dbReference type="Pfam" id="PF01225">
    <property type="entry name" value="Mur_ligase"/>
    <property type="match status" value="1"/>
</dbReference>
<dbReference type="Pfam" id="PF02875">
    <property type="entry name" value="Mur_ligase_C"/>
    <property type="match status" value="1"/>
</dbReference>
<dbReference type="Pfam" id="PF08245">
    <property type="entry name" value="Mur_ligase_M"/>
    <property type="match status" value="1"/>
</dbReference>
<dbReference type="SUPFAM" id="SSF51984">
    <property type="entry name" value="MurCD N-terminal domain"/>
    <property type="match status" value="1"/>
</dbReference>
<dbReference type="SUPFAM" id="SSF53623">
    <property type="entry name" value="MurD-like peptide ligases, catalytic domain"/>
    <property type="match status" value="1"/>
</dbReference>
<dbReference type="SUPFAM" id="SSF53244">
    <property type="entry name" value="MurD-like peptide ligases, peptide-binding domain"/>
    <property type="match status" value="1"/>
</dbReference>
<name>MURC_NITMU</name>
<comment type="function">
    <text evidence="1">Cell wall formation.</text>
</comment>
<comment type="catalytic activity">
    <reaction evidence="1">
        <text>UDP-N-acetyl-alpha-D-muramate + L-alanine + ATP = UDP-N-acetyl-alpha-D-muramoyl-L-alanine + ADP + phosphate + H(+)</text>
        <dbReference type="Rhea" id="RHEA:23372"/>
        <dbReference type="ChEBI" id="CHEBI:15378"/>
        <dbReference type="ChEBI" id="CHEBI:30616"/>
        <dbReference type="ChEBI" id="CHEBI:43474"/>
        <dbReference type="ChEBI" id="CHEBI:57972"/>
        <dbReference type="ChEBI" id="CHEBI:70757"/>
        <dbReference type="ChEBI" id="CHEBI:83898"/>
        <dbReference type="ChEBI" id="CHEBI:456216"/>
        <dbReference type="EC" id="6.3.2.8"/>
    </reaction>
</comment>
<comment type="pathway">
    <text evidence="1">Cell wall biogenesis; peptidoglycan biosynthesis.</text>
</comment>
<comment type="subcellular location">
    <subcellularLocation>
        <location evidence="1">Cytoplasm</location>
    </subcellularLocation>
</comment>
<comment type="similarity">
    <text evidence="1">Belongs to the MurCDEF family.</text>
</comment>
<comment type="sequence caution" evidence="2">
    <conflict type="erroneous initiation">
        <sequence resource="EMBL-CDS" id="ABB75782"/>
    </conflict>
</comment>
<proteinExistence type="inferred from homology"/>
<sequence>MKHKVKHIHFVGIGGSGMSGIAEVMLNLGYKISGSDIHDSVTTRRLKKLGATVYIGHARTHVESADAVVTSTAILPDNPEVLAARESKVPVVPRAIMLAELLRLRQGIAIAGTHGKTTTTSLITSVLAEAGMDPTFVIGGRLEAAGSHAKLGRGEFIVVEADESDASFLHLQPVLAVVTNIDADHMDTYEHDFGKLKQAFVDFVQHLPFYGMAVLCVDDAHVLEIMPAITKPVTTYGLSETAQVRAADIRHSEGQMHFTALIGVNGKTRKLKIVLNLPGLHNVQNALAAIAVCNEVGLPDVSIVRALADFKGVDRRFQRYGEIPLTDPETGRNGSFTLIDDYGHHPVEMAATIAAARGAFPGRRLVLAFQPHRYTRTRDLFEDFVKVLSTADVLLLTEVYSAGEAPIIAADSKSLARSLRVLGKVEPIFVERVDELEEAIHSIARDKDVVLVMGAGSVGGVAPTLSRDSQVEARLLVSPKENREPAVLLLQGS</sequence>
<evidence type="ECO:0000255" key="1">
    <source>
        <dbReference type="HAMAP-Rule" id="MF_00046"/>
    </source>
</evidence>
<evidence type="ECO:0000305" key="2"/>
<organism>
    <name type="scientific">Nitrosospira multiformis (strain ATCC 25196 / NCIMB 11849 / C 71)</name>
    <dbReference type="NCBI Taxonomy" id="323848"/>
    <lineage>
        <taxon>Bacteria</taxon>
        <taxon>Pseudomonadati</taxon>
        <taxon>Pseudomonadota</taxon>
        <taxon>Betaproteobacteria</taxon>
        <taxon>Nitrosomonadales</taxon>
        <taxon>Nitrosomonadaceae</taxon>
        <taxon>Nitrosospira</taxon>
    </lineage>
</organism>
<accession>Q2Y639</accession>
<reference key="1">
    <citation type="submission" date="2005-08" db="EMBL/GenBank/DDBJ databases">
        <title>Complete sequence of chromosome 1 of Nitrosospira multiformis ATCC 25196.</title>
        <authorList>
            <person name="Copeland A."/>
            <person name="Lucas S."/>
            <person name="Lapidus A."/>
            <person name="Barry K."/>
            <person name="Detter J.C."/>
            <person name="Glavina T."/>
            <person name="Hammon N."/>
            <person name="Israni S."/>
            <person name="Pitluck S."/>
            <person name="Chain P."/>
            <person name="Malfatti S."/>
            <person name="Shin M."/>
            <person name="Vergez L."/>
            <person name="Schmutz J."/>
            <person name="Larimer F."/>
            <person name="Land M."/>
            <person name="Hauser L."/>
            <person name="Kyrpides N."/>
            <person name="Lykidis A."/>
            <person name="Richardson P."/>
        </authorList>
    </citation>
    <scope>NUCLEOTIDE SEQUENCE [LARGE SCALE GENOMIC DNA]</scope>
    <source>
        <strain>ATCC 25196 / NCIMB 11849 / C 71</strain>
    </source>
</reference>